<accession>C0Q6N0</accession>
<reference key="1">
    <citation type="journal article" date="2009" name="PLoS ONE">
        <title>Salmonella paratyphi C: genetic divergence from Salmonella choleraesuis and pathogenic convergence with Salmonella typhi.</title>
        <authorList>
            <person name="Liu W.-Q."/>
            <person name="Feng Y."/>
            <person name="Wang Y."/>
            <person name="Zou Q.-H."/>
            <person name="Chen F."/>
            <person name="Guo J.-T."/>
            <person name="Peng Y.-H."/>
            <person name="Jin Y."/>
            <person name="Li Y.-G."/>
            <person name="Hu S.-N."/>
            <person name="Johnston R.N."/>
            <person name="Liu G.-R."/>
            <person name="Liu S.-L."/>
        </authorList>
    </citation>
    <scope>NUCLEOTIDE SEQUENCE [LARGE SCALE GENOMIC DNA]</scope>
    <source>
        <strain>RKS4594</strain>
    </source>
</reference>
<comment type="function">
    <text evidence="1">Thiolesterase that catalyzes the hydrolysis of S-D-lactoyl-glutathione to form glutathione and D-lactic acid.</text>
</comment>
<comment type="catalytic activity">
    <reaction evidence="1">
        <text>an S-(2-hydroxyacyl)glutathione + H2O = a 2-hydroxy carboxylate + glutathione + H(+)</text>
        <dbReference type="Rhea" id="RHEA:21864"/>
        <dbReference type="ChEBI" id="CHEBI:15377"/>
        <dbReference type="ChEBI" id="CHEBI:15378"/>
        <dbReference type="ChEBI" id="CHEBI:57925"/>
        <dbReference type="ChEBI" id="CHEBI:58896"/>
        <dbReference type="ChEBI" id="CHEBI:71261"/>
        <dbReference type="EC" id="3.1.2.6"/>
    </reaction>
</comment>
<comment type="cofactor">
    <cofactor evidence="1">
        <name>Zn(2+)</name>
        <dbReference type="ChEBI" id="CHEBI:29105"/>
    </cofactor>
    <text evidence="1">Binds 2 Zn(2+) ions per subunit.</text>
</comment>
<comment type="pathway">
    <text evidence="1">Secondary metabolite metabolism; methylglyoxal degradation; (R)-lactate from methylglyoxal: step 2/2.</text>
</comment>
<comment type="subunit">
    <text evidence="1">Monomer.</text>
</comment>
<comment type="similarity">
    <text evidence="1">Belongs to the metallo-beta-lactamase superfamily. Glyoxalase II family.</text>
</comment>
<organism>
    <name type="scientific">Salmonella paratyphi C (strain RKS4594)</name>
    <dbReference type="NCBI Taxonomy" id="476213"/>
    <lineage>
        <taxon>Bacteria</taxon>
        <taxon>Pseudomonadati</taxon>
        <taxon>Pseudomonadota</taxon>
        <taxon>Gammaproteobacteria</taxon>
        <taxon>Enterobacterales</taxon>
        <taxon>Enterobacteriaceae</taxon>
        <taxon>Salmonella</taxon>
    </lineage>
</organism>
<dbReference type="EC" id="3.1.2.6" evidence="1"/>
<dbReference type="EMBL" id="CP000857">
    <property type="protein sequence ID" value="ACN44459.1"/>
    <property type="molecule type" value="Genomic_DNA"/>
</dbReference>
<dbReference type="RefSeq" id="WP_001052777.1">
    <property type="nucleotide sequence ID" value="NC_012125.1"/>
</dbReference>
<dbReference type="SMR" id="C0Q6N0"/>
<dbReference type="KEGG" id="sei:SPC_0271"/>
<dbReference type="HOGENOM" id="CLU_030571_4_1_6"/>
<dbReference type="UniPathway" id="UPA00619">
    <property type="reaction ID" value="UER00676"/>
</dbReference>
<dbReference type="Proteomes" id="UP000001599">
    <property type="component" value="Chromosome"/>
</dbReference>
<dbReference type="GO" id="GO:0004416">
    <property type="term" value="F:hydroxyacylglutathione hydrolase activity"/>
    <property type="evidence" value="ECO:0007669"/>
    <property type="project" value="UniProtKB-UniRule"/>
</dbReference>
<dbReference type="GO" id="GO:0046872">
    <property type="term" value="F:metal ion binding"/>
    <property type="evidence" value="ECO:0007669"/>
    <property type="project" value="UniProtKB-KW"/>
</dbReference>
<dbReference type="GO" id="GO:0019243">
    <property type="term" value="P:methylglyoxal catabolic process to D-lactate via S-lactoyl-glutathione"/>
    <property type="evidence" value="ECO:0007669"/>
    <property type="project" value="InterPro"/>
</dbReference>
<dbReference type="CDD" id="cd07723">
    <property type="entry name" value="hydroxyacylglutathione_hydrolase_MBL-fold"/>
    <property type="match status" value="1"/>
</dbReference>
<dbReference type="Gene3D" id="3.60.15.10">
    <property type="entry name" value="Ribonuclease Z/Hydroxyacylglutathione hydrolase-like"/>
    <property type="match status" value="1"/>
</dbReference>
<dbReference type="HAMAP" id="MF_01374">
    <property type="entry name" value="Glyoxalase_2"/>
    <property type="match status" value="1"/>
</dbReference>
<dbReference type="InterPro" id="IPR035680">
    <property type="entry name" value="Clx_II_MBL"/>
</dbReference>
<dbReference type="InterPro" id="IPR050110">
    <property type="entry name" value="Glyoxalase_II_hydrolase"/>
</dbReference>
<dbReference type="InterPro" id="IPR032282">
    <property type="entry name" value="HAGH_C"/>
</dbReference>
<dbReference type="InterPro" id="IPR017782">
    <property type="entry name" value="Hydroxyacylglutathione_Hdrlase"/>
</dbReference>
<dbReference type="InterPro" id="IPR001279">
    <property type="entry name" value="Metallo-B-lactamas"/>
</dbReference>
<dbReference type="InterPro" id="IPR036866">
    <property type="entry name" value="RibonucZ/Hydroxyglut_hydro"/>
</dbReference>
<dbReference type="NCBIfam" id="TIGR03413">
    <property type="entry name" value="GSH_gloB"/>
    <property type="match status" value="1"/>
</dbReference>
<dbReference type="NCBIfam" id="NF007597">
    <property type="entry name" value="PRK10241.1"/>
    <property type="match status" value="1"/>
</dbReference>
<dbReference type="PANTHER" id="PTHR43705">
    <property type="entry name" value="HYDROXYACYLGLUTATHIONE HYDROLASE"/>
    <property type="match status" value="1"/>
</dbReference>
<dbReference type="PANTHER" id="PTHR43705:SF1">
    <property type="entry name" value="HYDROXYACYLGLUTATHIONE HYDROLASE GLOB"/>
    <property type="match status" value="1"/>
</dbReference>
<dbReference type="Pfam" id="PF16123">
    <property type="entry name" value="HAGH_C"/>
    <property type="match status" value="1"/>
</dbReference>
<dbReference type="Pfam" id="PF00753">
    <property type="entry name" value="Lactamase_B"/>
    <property type="match status" value="1"/>
</dbReference>
<dbReference type="PIRSF" id="PIRSF005457">
    <property type="entry name" value="Glx"/>
    <property type="match status" value="1"/>
</dbReference>
<dbReference type="SMART" id="SM00849">
    <property type="entry name" value="Lactamase_B"/>
    <property type="match status" value="1"/>
</dbReference>
<dbReference type="SUPFAM" id="SSF56281">
    <property type="entry name" value="Metallo-hydrolase/oxidoreductase"/>
    <property type="match status" value="1"/>
</dbReference>
<feature type="chain" id="PRO_1000184183" description="Hydroxyacylglutathione hydrolase">
    <location>
        <begin position="1"/>
        <end position="251"/>
    </location>
</feature>
<feature type="binding site" evidence="1">
    <location>
        <position position="53"/>
    </location>
    <ligand>
        <name>Zn(2+)</name>
        <dbReference type="ChEBI" id="CHEBI:29105"/>
        <label>1</label>
    </ligand>
</feature>
<feature type="binding site" evidence="1">
    <location>
        <position position="55"/>
    </location>
    <ligand>
        <name>Zn(2+)</name>
        <dbReference type="ChEBI" id="CHEBI:29105"/>
        <label>1</label>
    </ligand>
</feature>
<feature type="binding site" evidence="1">
    <location>
        <position position="57"/>
    </location>
    <ligand>
        <name>Zn(2+)</name>
        <dbReference type="ChEBI" id="CHEBI:29105"/>
        <label>2</label>
    </ligand>
</feature>
<feature type="binding site" evidence="1">
    <location>
        <position position="58"/>
    </location>
    <ligand>
        <name>Zn(2+)</name>
        <dbReference type="ChEBI" id="CHEBI:29105"/>
        <label>2</label>
    </ligand>
</feature>
<feature type="binding site" evidence="1">
    <location>
        <position position="110"/>
    </location>
    <ligand>
        <name>Zn(2+)</name>
        <dbReference type="ChEBI" id="CHEBI:29105"/>
        <label>1</label>
    </ligand>
</feature>
<feature type="binding site" evidence="1">
    <location>
        <position position="127"/>
    </location>
    <ligand>
        <name>Zn(2+)</name>
        <dbReference type="ChEBI" id="CHEBI:29105"/>
        <label>1</label>
    </ligand>
</feature>
<feature type="binding site" evidence="1">
    <location>
        <position position="127"/>
    </location>
    <ligand>
        <name>Zn(2+)</name>
        <dbReference type="ChEBI" id="CHEBI:29105"/>
        <label>2</label>
    </ligand>
</feature>
<feature type="binding site" evidence="1">
    <location>
        <position position="165"/>
    </location>
    <ligand>
        <name>Zn(2+)</name>
        <dbReference type="ChEBI" id="CHEBI:29105"/>
        <label>2</label>
    </ligand>
</feature>
<evidence type="ECO:0000255" key="1">
    <source>
        <dbReference type="HAMAP-Rule" id="MF_01374"/>
    </source>
</evidence>
<gene>
    <name evidence="1" type="primary">gloB</name>
    <name type="ordered locus">SPC_0271</name>
</gene>
<sequence length="251" mass="28657">MNLNSIPAFQDNYIWVLTNDEGRCVIVDPGEAAPVLKAIAEHKWMPEAIFLTHHHHDHVGGVKELLQHFPQMTVYGPAETQDKGATHLVGDGDTIRVLGEKFTLFATPGHTLGHVFYFSHPYLFCGDTLFSGGCGRLFEGTPSQMYQSLMKINSLPDDTLICCAHEYTLANIKFALSILPHDSFINEYYRKVKELRVKKQMTLPVILKNERKINLFLRTENIDLINEINKETILQQPEARFAWLRSKKDTF</sequence>
<protein>
    <recommendedName>
        <fullName evidence="1">Hydroxyacylglutathione hydrolase</fullName>
        <ecNumber evidence="1">3.1.2.6</ecNumber>
    </recommendedName>
    <alternativeName>
        <fullName evidence="1">Glyoxalase II</fullName>
        <shortName evidence="1">Glx II</shortName>
    </alternativeName>
</protein>
<proteinExistence type="inferred from homology"/>
<name>GLO2_SALPC</name>
<keyword id="KW-0378">Hydrolase</keyword>
<keyword id="KW-0479">Metal-binding</keyword>
<keyword id="KW-0862">Zinc</keyword>